<feature type="signal peptide" evidence="1">
    <location>
        <begin position="1"/>
        <end position="23"/>
    </location>
</feature>
<feature type="chain" id="PRO_5000201052" description="UPF0312 protein YE1254">
    <location>
        <begin position="24"/>
        <end position="192"/>
    </location>
</feature>
<keyword id="KW-0574">Periplasm</keyword>
<keyword id="KW-0732">Signal</keyword>
<comment type="subcellular location">
    <subcellularLocation>
        <location evidence="1">Periplasm</location>
    </subcellularLocation>
</comment>
<comment type="similarity">
    <text evidence="1">Belongs to the UPF0312 family. Type 1 subfamily.</text>
</comment>
<accession>A1JLK0</accession>
<protein>
    <recommendedName>
        <fullName evidence="1">UPF0312 protein YE1254</fullName>
    </recommendedName>
</protein>
<sequence>MFNKTLLGLTVGALMFTAGSAVAAEYKIDKEGQHAFIEFRIKHLGYSWLYGSFNDFDGSFTFDEKNPAADKVNVVINTNSVDTNHAERDKHLRSKEFLNVGKFPQATFTSTEVKKNAEGYTVVGNLTLNGVTKPVTLESKLTGQGNDPWGGYRAGFEANGNIKLKDFNITTDLGPASQEVELILSVEGVRAK</sequence>
<dbReference type="EMBL" id="AM286415">
    <property type="protein sequence ID" value="CAL11346.1"/>
    <property type="molecule type" value="Genomic_DNA"/>
</dbReference>
<dbReference type="RefSeq" id="WP_005172052.1">
    <property type="nucleotide sequence ID" value="NC_008800.1"/>
</dbReference>
<dbReference type="RefSeq" id="YP_001005577.1">
    <property type="nucleotide sequence ID" value="NC_008800.1"/>
</dbReference>
<dbReference type="SMR" id="A1JLK0"/>
<dbReference type="KEGG" id="yen:YE1254"/>
<dbReference type="PATRIC" id="fig|393305.7.peg.1361"/>
<dbReference type="eggNOG" id="COG2353">
    <property type="taxonomic scope" value="Bacteria"/>
</dbReference>
<dbReference type="HOGENOM" id="CLU_071003_1_2_6"/>
<dbReference type="OrthoDB" id="9811006at2"/>
<dbReference type="Proteomes" id="UP000000642">
    <property type="component" value="Chromosome"/>
</dbReference>
<dbReference type="GO" id="GO:0042597">
    <property type="term" value="C:periplasmic space"/>
    <property type="evidence" value="ECO:0007669"/>
    <property type="project" value="UniProtKB-SubCell"/>
</dbReference>
<dbReference type="Gene3D" id="2.40.128.110">
    <property type="entry name" value="Lipid/polyisoprenoid-binding, YceI-like"/>
    <property type="match status" value="1"/>
</dbReference>
<dbReference type="HAMAP" id="MF_00780">
    <property type="entry name" value="UPF0312"/>
    <property type="match status" value="1"/>
</dbReference>
<dbReference type="InterPro" id="IPR007372">
    <property type="entry name" value="Lipid/polyisoprenoid-bd_YceI"/>
</dbReference>
<dbReference type="InterPro" id="IPR036761">
    <property type="entry name" value="TTHA0802/YceI-like_sf"/>
</dbReference>
<dbReference type="InterPro" id="IPR023480">
    <property type="entry name" value="UPF0312/YceI"/>
</dbReference>
<dbReference type="NCBIfam" id="NF002994">
    <property type="entry name" value="PRK03757.1"/>
    <property type="match status" value="1"/>
</dbReference>
<dbReference type="PANTHER" id="PTHR34406">
    <property type="entry name" value="PROTEIN YCEI"/>
    <property type="match status" value="1"/>
</dbReference>
<dbReference type="PANTHER" id="PTHR34406:SF1">
    <property type="entry name" value="PROTEIN YCEI"/>
    <property type="match status" value="1"/>
</dbReference>
<dbReference type="Pfam" id="PF04264">
    <property type="entry name" value="YceI"/>
    <property type="match status" value="1"/>
</dbReference>
<dbReference type="SMART" id="SM00867">
    <property type="entry name" value="YceI"/>
    <property type="match status" value="1"/>
</dbReference>
<dbReference type="SUPFAM" id="SSF101874">
    <property type="entry name" value="YceI-like"/>
    <property type="match status" value="1"/>
</dbReference>
<gene>
    <name type="ordered locus">YE1254</name>
</gene>
<organism>
    <name type="scientific">Yersinia enterocolitica serotype O:8 / biotype 1B (strain NCTC 13174 / 8081)</name>
    <dbReference type="NCBI Taxonomy" id="393305"/>
    <lineage>
        <taxon>Bacteria</taxon>
        <taxon>Pseudomonadati</taxon>
        <taxon>Pseudomonadota</taxon>
        <taxon>Gammaproteobacteria</taxon>
        <taxon>Enterobacterales</taxon>
        <taxon>Yersiniaceae</taxon>
        <taxon>Yersinia</taxon>
    </lineage>
</organism>
<proteinExistence type="inferred from homology"/>
<evidence type="ECO:0000255" key="1">
    <source>
        <dbReference type="HAMAP-Rule" id="MF_00780"/>
    </source>
</evidence>
<reference key="1">
    <citation type="journal article" date="2006" name="PLoS Genet.">
        <title>The complete genome sequence and comparative genome analysis of the high pathogenicity Yersinia enterocolitica strain 8081.</title>
        <authorList>
            <person name="Thomson N.R."/>
            <person name="Howard S."/>
            <person name="Wren B.W."/>
            <person name="Holden M.T.G."/>
            <person name="Crossman L."/>
            <person name="Challis G.L."/>
            <person name="Churcher C."/>
            <person name="Mungall K."/>
            <person name="Brooks K."/>
            <person name="Chillingworth T."/>
            <person name="Feltwell T."/>
            <person name="Abdellah Z."/>
            <person name="Hauser H."/>
            <person name="Jagels K."/>
            <person name="Maddison M."/>
            <person name="Moule S."/>
            <person name="Sanders M."/>
            <person name="Whitehead S."/>
            <person name="Quail M.A."/>
            <person name="Dougan G."/>
            <person name="Parkhill J."/>
            <person name="Prentice M.B."/>
        </authorList>
    </citation>
    <scope>NUCLEOTIDE SEQUENCE [LARGE SCALE GENOMIC DNA]</scope>
    <source>
        <strain>NCTC 13174 / 8081</strain>
    </source>
</reference>
<name>Y1254_YERE8</name>